<sequence>MTHISNNRPRIAVIGGGIAGLTVAASLLRAGIECTVYEQATVFADAGAGIQIAPNSARILHRLGLAGALERRATRAHAIETRRWQDGAPLARTELGEPCVERYGAPYYLIQRADLHRSLLELLPPGVVRHSAACTAVEERPDGVTLRFADGTSEEAGVVVGADGIHSALRNHLVGDRPRFSGHTVHRGLVAADRLPSLFEVPKVLFWLGPNGHVTSYPIAQHGLVHFSAVITSPEWDPEVWSAPSRPGEAAAAFAGWNAEVAELIGAAEQAHHWALFDRDCVGGWSTGRMTLAGDAAHPMVPYLSQGANQAIEDAWVLADLLGAADLDPGPALRRYEELRLPRVREVHRRSRERGHEFHLPDGPQQRLRDRSMPTAERLDDYAWIYGFEAAPVGSR</sequence>
<comment type="function">
    <text evidence="4 5 8">Part of a gene cluster involved in the biosynthesis of thioplatensimycin (thioPTM) and platensimycin (PTM), potent and selective inhibitors of bacterial and mammalian fatty acid synthases (PubMed:21825154, PubMed:29915173). Catalyzes the hydroxylation of 3-amino-4-hydroxybenzoate (3,4-AHBA) to 3-amino-2,4-dihydroxybenzoate (3,2,4-ADHBA) (Probable).</text>
</comment>
<comment type="catalytic activity">
    <reaction evidence="8">
        <text>3-amino-4-hydroxybenzoate + NADPH + O2 + H(+) = 3-amino-2,4-dihydroxybenzoate + NADP(+) + H2O</text>
        <dbReference type="Rhea" id="RHEA:68992"/>
        <dbReference type="ChEBI" id="CHEBI:15377"/>
        <dbReference type="ChEBI" id="CHEBI:15378"/>
        <dbReference type="ChEBI" id="CHEBI:15379"/>
        <dbReference type="ChEBI" id="CHEBI:57783"/>
        <dbReference type="ChEBI" id="CHEBI:58349"/>
        <dbReference type="ChEBI" id="CHEBI:60005"/>
        <dbReference type="ChEBI" id="CHEBI:180657"/>
        <dbReference type="EC" id="1.14.13.249"/>
    </reaction>
</comment>
<comment type="cofactor">
    <cofactor evidence="2">
        <name>FAD</name>
        <dbReference type="ChEBI" id="CHEBI:57692"/>
    </cofactor>
    <text evidence="2">Binds 1 FAD molecule per subunit.</text>
</comment>
<comment type="pathway">
    <text evidence="8 9">Antibiotic biosynthesis.</text>
</comment>
<comment type="similarity">
    <text evidence="7">Belongs to the 6-hydroxynicotinate 3-monooxygenase family.</text>
</comment>
<organism>
    <name type="scientific">Streptomyces platensis</name>
    <dbReference type="NCBI Taxonomy" id="58346"/>
    <lineage>
        <taxon>Bacteria</taxon>
        <taxon>Bacillati</taxon>
        <taxon>Actinomycetota</taxon>
        <taxon>Actinomycetes</taxon>
        <taxon>Kitasatosporales</taxon>
        <taxon>Streptomycetaceae</taxon>
        <taxon>Streptomyces</taxon>
    </lineage>
</organism>
<evidence type="ECO:0000250" key="1">
    <source>
        <dbReference type="UniProtKB" id="A0A0H3LKL4"/>
    </source>
</evidence>
<evidence type="ECO:0000250" key="2">
    <source>
        <dbReference type="UniProtKB" id="Q88FY2"/>
    </source>
</evidence>
<evidence type="ECO:0000256" key="3">
    <source>
        <dbReference type="SAM" id="MobiDB-lite"/>
    </source>
</evidence>
<evidence type="ECO:0000269" key="4">
    <source>
    </source>
</evidence>
<evidence type="ECO:0000269" key="5">
    <source>
    </source>
</evidence>
<evidence type="ECO:0000303" key="6">
    <source>
    </source>
</evidence>
<evidence type="ECO:0000305" key="7"/>
<evidence type="ECO:0000305" key="8">
    <source>
    </source>
</evidence>
<evidence type="ECO:0000305" key="9">
    <source>
    </source>
</evidence>
<reference key="1">
    <citation type="journal article" date="2011" name="Proc. Natl. Acad. Sci. U.S.A.">
        <title>Dedicated ent-kaurene and ent-atiserene synthases for platensimycin and platencin biosynthesis.</title>
        <authorList>
            <person name="Smanski M.J."/>
            <person name="Yu Z."/>
            <person name="Casper J."/>
            <person name="Lin S."/>
            <person name="Peterson R.M."/>
            <person name="Chen Y."/>
            <person name="Wendt-Pienkowski E."/>
            <person name="Rajski S.R."/>
            <person name="Shen B."/>
        </authorList>
    </citation>
    <scope>NUCLEOTIDE SEQUENCE [GENOMIC DNA]</scope>
    <scope>FUNCTION</scope>
    <source>
        <strain>MA7327</strain>
    </source>
</reference>
<reference key="2">
    <citation type="journal article" date="2018" name="Nat. Commun.">
        <title>Biosynthesis of thiocarboxylic acid-containing natural products.</title>
        <authorList>
            <person name="Dong L.B."/>
            <person name="Rudolf J.D."/>
            <person name="Kang D."/>
            <person name="Wang N."/>
            <person name="He C.Q."/>
            <person name="Deng Y."/>
            <person name="Huang Y."/>
            <person name="Houk K.N."/>
            <person name="Duan Y."/>
            <person name="Shen B."/>
        </authorList>
    </citation>
    <scope>FUNCTION</scope>
    <source>
        <strain>MA7327</strain>
    </source>
</reference>
<dbReference type="EC" id="1.14.13.249" evidence="8"/>
<dbReference type="EMBL" id="FJ655920">
    <property type="protein sequence ID" value="ACO31289.1"/>
    <property type="molecule type" value="Genomic_DNA"/>
</dbReference>
<dbReference type="SMR" id="D8L2V9"/>
<dbReference type="KEGG" id="ag:ACO31289"/>
<dbReference type="BioCyc" id="MetaCyc:MONOMER-21314"/>
<dbReference type="GO" id="GO:0071949">
    <property type="term" value="F:FAD binding"/>
    <property type="evidence" value="ECO:0007669"/>
    <property type="project" value="InterPro"/>
</dbReference>
<dbReference type="GO" id="GO:0004497">
    <property type="term" value="F:monooxygenase activity"/>
    <property type="evidence" value="ECO:0007669"/>
    <property type="project" value="UniProtKB-KW"/>
</dbReference>
<dbReference type="GO" id="GO:0017000">
    <property type="term" value="P:antibiotic biosynthetic process"/>
    <property type="evidence" value="ECO:0007669"/>
    <property type="project" value="UniProtKB-KW"/>
</dbReference>
<dbReference type="Gene3D" id="3.50.50.60">
    <property type="entry name" value="FAD/NAD(P)-binding domain"/>
    <property type="match status" value="1"/>
</dbReference>
<dbReference type="InterPro" id="IPR002938">
    <property type="entry name" value="FAD-bd"/>
</dbReference>
<dbReference type="InterPro" id="IPR050493">
    <property type="entry name" value="FAD-dep_Monooxygenase_BioMet"/>
</dbReference>
<dbReference type="InterPro" id="IPR036188">
    <property type="entry name" value="FAD/NAD-bd_sf"/>
</dbReference>
<dbReference type="PANTHER" id="PTHR13789:SF318">
    <property type="entry name" value="GERANYLGERANYL DIPHOSPHATE REDUCTASE"/>
    <property type="match status" value="1"/>
</dbReference>
<dbReference type="PANTHER" id="PTHR13789">
    <property type="entry name" value="MONOOXYGENASE"/>
    <property type="match status" value="1"/>
</dbReference>
<dbReference type="Pfam" id="PF01494">
    <property type="entry name" value="FAD_binding_3"/>
    <property type="match status" value="1"/>
</dbReference>
<dbReference type="PRINTS" id="PR00420">
    <property type="entry name" value="RNGMNOXGNASE"/>
</dbReference>
<dbReference type="SUPFAM" id="SSF54373">
    <property type="entry name" value="FAD-linked reductases, C-terminal domain"/>
    <property type="match status" value="1"/>
</dbReference>
<dbReference type="SUPFAM" id="SSF51905">
    <property type="entry name" value="FAD/NAD(P)-binding domain"/>
    <property type="match status" value="1"/>
</dbReference>
<accession>D8L2V9</accession>
<protein>
    <recommendedName>
        <fullName evidence="7">3-amino-4-hydroxybenzoate 2-monooxygenase PtmB3</fullName>
        <ecNumber evidence="8">1.14.13.249</ecNumber>
    </recommendedName>
</protein>
<name>AHBM1_STRPT</name>
<gene>
    <name evidence="6" type="primary">PtmB3</name>
</gene>
<proteinExistence type="inferred from homology"/>
<keyword id="KW-0045">Antibiotic biosynthesis</keyword>
<keyword id="KW-0274">FAD</keyword>
<keyword id="KW-0285">Flavoprotein</keyword>
<keyword id="KW-0503">Monooxygenase</keyword>
<keyword id="KW-0521">NADP</keyword>
<keyword id="KW-0560">Oxidoreductase</keyword>
<feature type="chain" id="PRO_0000457474" description="3-amino-4-hydroxybenzoate 2-monooxygenase PtmB3">
    <location>
        <begin position="1"/>
        <end position="396"/>
    </location>
</feature>
<feature type="region of interest" description="Disordered" evidence="3">
    <location>
        <begin position="352"/>
        <end position="371"/>
    </location>
</feature>
<feature type="active site" description="Proton acceptor" evidence="1">
    <location>
        <position position="217"/>
    </location>
</feature>
<feature type="binding site" evidence="2">
    <location>
        <position position="19"/>
    </location>
    <ligand>
        <name>FAD</name>
        <dbReference type="ChEBI" id="CHEBI:57692"/>
    </ligand>
</feature>
<feature type="binding site" evidence="2">
    <location>
        <begin position="38"/>
        <end position="39"/>
    </location>
    <ligand>
        <name>FAD</name>
        <dbReference type="ChEBI" id="CHEBI:57692"/>
    </ligand>
</feature>
<feature type="binding site" evidence="2">
    <location>
        <position position="112"/>
    </location>
    <ligand>
        <name>FAD</name>
        <dbReference type="ChEBI" id="CHEBI:57692"/>
    </ligand>
</feature>
<feature type="binding site" evidence="2">
    <location>
        <position position="295"/>
    </location>
    <ligand>
        <name>FAD</name>
        <dbReference type="ChEBI" id="CHEBI:57692"/>
    </ligand>
</feature>